<proteinExistence type="inferred from homology"/>
<accession>A3LYS9</accession>
<sequence length="430" mass="48026">MCDVVLGSQWGDEGKGKLVDLLCDDIDVCARCQGGNNAGHTIVVGDVKYDFHMLPSGLVNPNCLNLVGSGVVVHVPSFFQELENLEKKGLNCRDRLFLSSRAHLVFDFHQRTDKLKEAELSENKKAIGTTGKGIGPTYSTKASRSGIRVHHLVSEDPEAWEEFKTRYHRLVNSRKQRYGEFDYDVEEELARYEKYRELLRPFVVDSIEFMHTALVQNKRILVEGANALMLDIDFGTYPYVTSSSTGIGGVLTGLGIPPKTINNIYGVVKAYTTRVGEGPFPTEQLNEFGEALQTIGAEYGVTTGRKRRCGWLDLVVLKYSTLINGYTSLNITKLDVLDSFKEIQVGVGYKLNGKSLASFPEDLIKLGKVEVEYKTLPGWETDITKIKTYDELPENAKSYLKFIEDYLGVPVQWVGTGPARDSMLEKPISK</sequence>
<protein>
    <recommendedName>
        <fullName evidence="2">Adenylosuccinate synthetase</fullName>
        <shortName evidence="2">AMPSase</shortName>
        <shortName evidence="2">AdSS</shortName>
        <ecNumber evidence="2">6.3.4.4</ecNumber>
    </recommendedName>
    <alternativeName>
        <fullName evidence="2">IMP--aspartate ligase</fullName>
    </alternativeName>
</protein>
<comment type="function">
    <text evidence="1">Plays an important role in the de novo pathway and in the salvage pathway of purine nucleotide biosynthesis. Catalyzes the first committed step in the biosynthesis of AMP from IMP (By similarity).</text>
</comment>
<comment type="catalytic activity">
    <reaction evidence="2">
        <text>IMP + L-aspartate + GTP = N(6)-(1,2-dicarboxyethyl)-AMP + GDP + phosphate + 2 H(+)</text>
        <dbReference type="Rhea" id="RHEA:15753"/>
        <dbReference type="ChEBI" id="CHEBI:15378"/>
        <dbReference type="ChEBI" id="CHEBI:29991"/>
        <dbReference type="ChEBI" id="CHEBI:37565"/>
        <dbReference type="ChEBI" id="CHEBI:43474"/>
        <dbReference type="ChEBI" id="CHEBI:57567"/>
        <dbReference type="ChEBI" id="CHEBI:58053"/>
        <dbReference type="ChEBI" id="CHEBI:58189"/>
        <dbReference type="EC" id="6.3.4.4"/>
    </reaction>
</comment>
<comment type="cofactor">
    <cofactor evidence="2">
        <name>Mg(2+)</name>
        <dbReference type="ChEBI" id="CHEBI:18420"/>
    </cofactor>
    <text evidence="2">Binds 1 Mg(2+) ion per subunit.</text>
</comment>
<comment type="pathway">
    <text evidence="2">Purine metabolism; AMP biosynthesis via de novo pathway; AMP from IMP: step 1/2.</text>
</comment>
<comment type="subunit">
    <text evidence="2">Homodimer.</text>
</comment>
<comment type="subcellular location">
    <subcellularLocation>
        <location evidence="2">Cytoplasm</location>
    </subcellularLocation>
</comment>
<comment type="similarity">
    <text evidence="2">Belongs to the adenylosuccinate synthetase family.</text>
</comment>
<name>PURA_PICST</name>
<reference key="1">
    <citation type="journal article" date="2007" name="Nat. Biotechnol.">
        <title>Genome sequence of the lignocellulose-bioconverting and xylose-fermenting yeast Pichia stipitis.</title>
        <authorList>
            <person name="Jeffries T.W."/>
            <person name="Grigoriev I.V."/>
            <person name="Grimwood J."/>
            <person name="Laplaza J.M."/>
            <person name="Aerts A."/>
            <person name="Salamov A."/>
            <person name="Schmutz J."/>
            <person name="Lindquist E."/>
            <person name="Dehal P."/>
            <person name="Shapiro H."/>
            <person name="Jin Y.-S."/>
            <person name="Passoth V."/>
            <person name="Richardson P.M."/>
        </authorList>
    </citation>
    <scope>NUCLEOTIDE SEQUENCE [LARGE SCALE GENOMIC DNA]</scope>
    <source>
        <strain>ATCC 58785 / CBS 6054 / NBRC 10063 / NRRL Y-11545</strain>
    </source>
</reference>
<evidence type="ECO:0000250" key="1"/>
<evidence type="ECO:0000255" key="2">
    <source>
        <dbReference type="HAMAP-Rule" id="MF_03125"/>
    </source>
</evidence>
<feature type="chain" id="PRO_0000399356" description="Adenylosuccinate synthetase">
    <location>
        <begin position="1"/>
        <end position="430"/>
    </location>
</feature>
<feature type="active site" description="Proton acceptor" evidence="2">
    <location>
        <position position="12"/>
    </location>
</feature>
<feature type="active site" description="Proton donor" evidence="2">
    <location>
        <position position="40"/>
    </location>
</feature>
<feature type="binding site" evidence="2">
    <location>
        <begin position="11"/>
        <end position="17"/>
    </location>
    <ligand>
        <name>GTP</name>
        <dbReference type="ChEBI" id="CHEBI:37565"/>
    </ligand>
</feature>
<feature type="binding site" description="in other chain" evidence="2">
    <location>
        <begin position="12"/>
        <end position="15"/>
    </location>
    <ligand>
        <name>IMP</name>
        <dbReference type="ChEBI" id="CHEBI:58053"/>
        <note>ligand shared between dimeric partners</note>
    </ligand>
</feature>
<feature type="binding site" evidence="2">
    <location>
        <position position="12"/>
    </location>
    <ligand>
        <name>Mg(2+)</name>
        <dbReference type="ChEBI" id="CHEBI:18420"/>
    </ligand>
</feature>
<feature type="binding site" description="in other chain" evidence="2">
    <location>
        <begin position="37"/>
        <end position="40"/>
    </location>
    <ligand>
        <name>IMP</name>
        <dbReference type="ChEBI" id="CHEBI:58053"/>
        <note>ligand shared between dimeric partners</note>
    </ligand>
</feature>
<feature type="binding site" evidence="2">
    <location>
        <begin position="39"/>
        <end position="41"/>
    </location>
    <ligand>
        <name>GTP</name>
        <dbReference type="ChEBI" id="CHEBI:37565"/>
    </ligand>
</feature>
<feature type="binding site" evidence="2">
    <location>
        <position position="39"/>
    </location>
    <ligand>
        <name>Mg(2+)</name>
        <dbReference type="ChEBI" id="CHEBI:18420"/>
    </ligand>
</feature>
<feature type="binding site" description="in other chain" evidence="2">
    <location>
        <position position="130"/>
    </location>
    <ligand>
        <name>IMP</name>
        <dbReference type="ChEBI" id="CHEBI:58053"/>
        <note>ligand shared between dimeric partners</note>
    </ligand>
</feature>
<feature type="binding site" evidence="2">
    <location>
        <position position="144"/>
    </location>
    <ligand>
        <name>IMP</name>
        <dbReference type="ChEBI" id="CHEBI:58053"/>
        <note>ligand shared between dimeric partners</note>
    </ligand>
</feature>
<feature type="binding site" description="in other chain" evidence="2">
    <location>
        <position position="226"/>
    </location>
    <ligand>
        <name>IMP</name>
        <dbReference type="ChEBI" id="CHEBI:58053"/>
        <note>ligand shared between dimeric partners</note>
    </ligand>
</feature>
<feature type="binding site" description="in other chain" evidence="2">
    <location>
        <position position="241"/>
    </location>
    <ligand>
        <name>IMP</name>
        <dbReference type="ChEBI" id="CHEBI:58053"/>
        <note>ligand shared between dimeric partners</note>
    </ligand>
</feature>
<feature type="binding site" evidence="2">
    <location>
        <begin position="301"/>
        <end position="307"/>
    </location>
    <ligand>
        <name>substrate</name>
    </ligand>
</feature>
<feature type="binding site" description="in other chain" evidence="2">
    <location>
        <position position="305"/>
    </location>
    <ligand>
        <name>IMP</name>
        <dbReference type="ChEBI" id="CHEBI:58053"/>
        <note>ligand shared between dimeric partners</note>
    </ligand>
</feature>
<feature type="binding site" evidence="2">
    <location>
        <position position="307"/>
    </location>
    <ligand>
        <name>GTP</name>
        <dbReference type="ChEBI" id="CHEBI:37565"/>
    </ligand>
</feature>
<feature type="binding site" evidence="2">
    <location>
        <begin position="333"/>
        <end position="335"/>
    </location>
    <ligand>
        <name>GTP</name>
        <dbReference type="ChEBI" id="CHEBI:37565"/>
    </ligand>
</feature>
<feature type="binding site" evidence="2">
    <location>
        <begin position="415"/>
        <end position="417"/>
    </location>
    <ligand>
        <name>GTP</name>
        <dbReference type="ChEBI" id="CHEBI:37565"/>
    </ligand>
</feature>
<keyword id="KW-0963">Cytoplasm</keyword>
<keyword id="KW-0342">GTP-binding</keyword>
<keyword id="KW-0436">Ligase</keyword>
<keyword id="KW-0460">Magnesium</keyword>
<keyword id="KW-0479">Metal-binding</keyword>
<keyword id="KW-0547">Nucleotide-binding</keyword>
<keyword id="KW-0658">Purine biosynthesis</keyword>
<keyword id="KW-1185">Reference proteome</keyword>
<dbReference type="EC" id="6.3.4.4" evidence="2"/>
<dbReference type="EMBL" id="CP000501">
    <property type="protein sequence ID" value="ABN68029.1"/>
    <property type="molecule type" value="Genomic_DNA"/>
</dbReference>
<dbReference type="RefSeq" id="XP_001386058.1">
    <property type="nucleotide sequence ID" value="XM_001386021.1"/>
</dbReference>
<dbReference type="SMR" id="A3LYS9"/>
<dbReference type="FunCoup" id="A3LYS9">
    <property type="interactions" value="846"/>
</dbReference>
<dbReference type="STRING" id="322104.A3LYS9"/>
<dbReference type="GeneID" id="4840768"/>
<dbReference type="KEGG" id="pic:PICST_85387"/>
<dbReference type="eggNOG" id="KOG1355">
    <property type="taxonomic scope" value="Eukaryota"/>
</dbReference>
<dbReference type="HOGENOM" id="CLU_029848_3_2_1"/>
<dbReference type="InParanoid" id="A3LYS9"/>
<dbReference type="OMA" id="FHHAKPI"/>
<dbReference type="OrthoDB" id="10265645at2759"/>
<dbReference type="UniPathway" id="UPA00075">
    <property type="reaction ID" value="UER00335"/>
</dbReference>
<dbReference type="Proteomes" id="UP000002258">
    <property type="component" value="Chromosome 7"/>
</dbReference>
<dbReference type="GO" id="GO:0005737">
    <property type="term" value="C:cytoplasm"/>
    <property type="evidence" value="ECO:0007669"/>
    <property type="project" value="UniProtKB-SubCell"/>
</dbReference>
<dbReference type="GO" id="GO:0004019">
    <property type="term" value="F:adenylosuccinate synthase activity"/>
    <property type="evidence" value="ECO:0007669"/>
    <property type="project" value="UniProtKB-UniRule"/>
</dbReference>
<dbReference type="GO" id="GO:0005525">
    <property type="term" value="F:GTP binding"/>
    <property type="evidence" value="ECO:0007669"/>
    <property type="project" value="UniProtKB-UniRule"/>
</dbReference>
<dbReference type="GO" id="GO:0000287">
    <property type="term" value="F:magnesium ion binding"/>
    <property type="evidence" value="ECO:0007669"/>
    <property type="project" value="UniProtKB-UniRule"/>
</dbReference>
<dbReference type="GO" id="GO:0044208">
    <property type="term" value="P:'de novo' AMP biosynthetic process"/>
    <property type="evidence" value="ECO:0007669"/>
    <property type="project" value="UniProtKB-UniRule"/>
</dbReference>
<dbReference type="GO" id="GO:0046040">
    <property type="term" value="P:IMP metabolic process"/>
    <property type="evidence" value="ECO:0007669"/>
    <property type="project" value="TreeGrafter"/>
</dbReference>
<dbReference type="CDD" id="cd03108">
    <property type="entry name" value="AdSS"/>
    <property type="match status" value="1"/>
</dbReference>
<dbReference type="FunFam" id="3.90.170.10:FF:000001">
    <property type="entry name" value="Adenylosuccinate synthetase"/>
    <property type="match status" value="1"/>
</dbReference>
<dbReference type="FunFam" id="1.10.300.10:FF:000002">
    <property type="entry name" value="Adenylosuccinate synthetase, chloroplastic"/>
    <property type="match status" value="1"/>
</dbReference>
<dbReference type="Gene3D" id="3.40.440.10">
    <property type="entry name" value="Adenylosuccinate Synthetase, subunit A, domain 1"/>
    <property type="match status" value="1"/>
</dbReference>
<dbReference type="Gene3D" id="1.10.300.10">
    <property type="entry name" value="Adenylosuccinate Synthetase, subunit A, domain 2"/>
    <property type="match status" value="1"/>
</dbReference>
<dbReference type="Gene3D" id="3.90.170.10">
    <property type="entry name" value="Adenylosuccinate Synthetase, subunit A, domain 3"/>
    <property type="match status" value="1"/>
</dbReference>
<dbReference type="HAMAP" id="MF_00011">
    <property type="entry name" value="Adenylosucc_synth"/>
    <property type="match status" value="1"/>
</dbReference>
<dbReference type="InterPro" id="IPR018220">
    <property type="entry name" value="Adenylosuccin_syn_GTP-bd"/>
</dbReference>
<dbReference type="InterPro" id="IPR033128">
    <property type="entry name" value="Adenylosuccin_syn_Lys_AS"/>
</dbReference>
<dbReference type="InterPro" id="IPR042109">
    <property type="entry name" value="Adenylosuccinate_synth_dom1"/>
</dbReference>
<dbReference type="InterPro" id="IPR042110">
    <property type="entry name" value="Adenylosuccinate_synth_dom2"/>
</dbReference>
<dbReference type="InterPro" id="IPR042111">
    <property type="entry name" value="Adenylosuccinate_synth_dom3"/>
</dbReference>
<dbReference type="InterPro" id="IPR001114">
    <property type="entry name" value="Adenylosuccinate_synthetase"/>
</dbReference>
<dbReference type="InterPro" id="IPR027417">
    <property type="entry name" value="P-loop_NTPase"/>
</dbReference>
<dbReference type="NCBIfam" id="NF002223">
    <property type="entry name" value="PRK01117.1"/>
    <property type="match status" value="1"/>
</dbReference>
<dbReference type="NCBIfam" id="TIGR00184">
    <property type="entry name" value="purA"/>
    <property type="match status" value="1"/>
</dbReference>
<dbReference type="PANTHER" id="PTHR11846">
    <property type="entry name" value="ADENYLOSUCCINATE SYNTHETASE"/>
    <property type="match status" value="1"/>
</dbReference>
<dbReference type="PANTHER" id="PTHR11846:SF0">
    <property type="entry name" value="ADENYLOSUCCINATE SYNTHETASE"/>
    <property type="match status" value="1"/>
</dbReference>
<dbReference type="Pfam" id="PF00709">
    <property type="entry name" value="Adenylsucc_synt"/>
    <property type="match status" value="1"/>
</dbReference>
<dbReference type="SMART" id="SM00788">
    <property type="entry name" value="Adenylsucc_synt"/>
    <property type="match status" value="1"/>
</dbReference>
<dbReference type="SUPFAM" id="SSF52540">
    <property type="entry name" value="P-loop containing nucleoside triphosphate hydrolases"/>
    <property type="match status" value="1"/>
</dbReference>
<dbReference type="PROSITE" id="PS01266">
    <property type="entry name" value="ADENYLOSUCCIN_SYN_1"/>
    <property type="match status" value="1"/>
</dbReference>
<dbReference type="PROSITE" id="PS00513">
    <property type="entry name" value="ADENYLOSUCCIN_SYN_2"/>
    <property type="match status" value="1"/>
</dbReference>
<organism>
    <name type="scientific">Scheffersomyces stipitis (strain ATCC 58785 / CBS 6054 / NBRC 10063 / NRRL Y-11545)</name>
    <name type="common">Yeast</name>
    <name type="synonym">Pichia stipitis</name>
    <dbReference type="NCBI Taxonomy" id="322104"/>
    <lineage>
        <taxon>Eukaryota</taxon>
        <taxon>Fungi</taxon>
        <taxon>Dikarya</taxon>
        <taxon>Ascomycota</taxon>
        <taxon>Saccharomycotina</taxon>
        <taxon>Pichiomycetes</taxon>
        <taxon>Debaryomycetaceae</taxon>
        <taxon>Scheffersomyces</taxon>
    </lineage>
</organism>
<gene>
    <name type="ORF">PICST_85387</name>
</gene>